<keyword id="KW-1035">Host cytoplasm</keyword>
<keyword id="KW-0945">Host-virus interaction</keyword>
<keyword id="KW-1100">Inhibition of host NF-kappa-B by virus</keyword>
<keyword id="KW-1185">Reference proteome</keyword>
<organism>
    <name type="scientific">African swine fever virus (strain Badajoz 1971 Vero-adapted)</name>
    <name type="common">Ba71V</name>
    <name type="synonym">ASFV</name>
    <dbReference type="NCBI Taxonomy" id="10498"/>
    <lineage>
        <taxon>Viruses</taxon>
        <taxon>Varidnaviria</taxon>
        <taxon>Bamfordvirae</taxon>
        <taxon>Nucleocytoviricota</taxon>
        <taxon>Pokkesviricetes</taxon>
        <taxon>Asfuvirales</taxon>
        <taxon>Asfarviridae</taxon>
        <taxon>Asfivirus</taxon>
        <taxon>African swine fever virus</taxon>
    </lineage>
</organism>
<reference key="1">
    <citation type="journal article" date="1995" name="Virology">
        <title>Analysis of the complete nucleotide sequence of African swine fever virus.</title>
        <authorList>
            <person name="Yanez R.J."/>
            <person name="Rodriguez J.M."/>
            <person name="Nogal M.L."/>
            <person name="Yuste L."/>
            <person name="Enriquez C."/>
            <person name="Rodriguez J.F."/>
            <person name="Vinuela E."/>
        </authorList>
    </citation>
    <scope>NUCLEOTIDE SEQUENCE [LARGE SCALE GENOMIC DNA]</scope>
</reference>
<reference key="2">
    <citation type="journal article" date="2022" name="Vet. Res.">
        <title>ASFV pD345L protein negatively regulates NF-kappaB signalling by inhibiting IKK kinase activity.</title>
        <authorList>
            <person name="Chen H."/>
            <person name="Wang Z."/>
            <person name="Gao X."/>
            <person name="Lv J."/>
            <person name="Hu Y."/>
            <person name="Jung Y.S."/>
            <person name="Zhu S."/>
            <person name="Wu X."/>
            <person name="Qian Y."/>
            <person name="Dai J."/>
        </authorList>
    </citation>
    <scope>FUNCTION</scope>
    <scope>INTERACTION WITH HOST IKKA AND IKBKB</scope>
    <scope>SUBCELLULAR LOCATION</scope>
</reference>
<dbReference type="EMBL" id="U18466">
    <property type="protein sequence ID" value="AAA65338.1"/>
    <property type="molecule type" value="Genomic_DNA"/>
</dbReference>
<dbReference type="RefSeq" id="NP_042802.1">
    <property type="nucleotide sequence ID" value="NC_001659.2"/>
</dbReference>
<dbReference type="GeneID" id="22220338"/>
<dbReference type="KEGG" id="vg:22220338"/>
<dbReference type="Proteomes" id="UP000000624">
    <property type="component" value="Segment"/>
</dbReference>
<dbReference type="GO" id="GO:0030430">
    <property type="term" value="C:host cell cytoplasm"/>
    <property type="evidence" value="ECO:0007669"/>
    <property type="project" value="UniProtKB-SubCell"/>
</dbReference>
<dbReference type="GO" id="GO:0085034">
    <property type="term" value="P:symbiont-mediated suppression of host NF-kappaB cascade"/>
    <property type="evidence" value="ECO:0007669"/>
    <property type="project" value="UniProtKB-KW"/>
</dbReference>
<dbReference type="Gene3D" id="3.90.320.10">
    <property type="match status" value="1"/>
</dbReference>
<dbReference type="InterPro" id="IPR051703">
    <property type="entry name" value="NF-kappa-B_Signaling_Reg"/>
</dbReference>
<dbReference type="InterPro" id="IPR011604">
    <property type="entry name" value="PDDEXK-like_dom_sf"/>
</dbReference>
<dbReference type="InterPro" id="IPR011335">
    <property type="entry name" value="Restrct_endonuc-II-like"/>
</dbReference>
<dbReference type="InterPro" id="IPR019080">
    <property type="entry name" value="YqaJ_viral_recombinase"/>
</dbReference>
<dbReference type="PANTHER" id="PTHR46609">
    <property type="entry name" value="EXONUCLEASE, PHAGE-TYPE/RECB, C-TERMINAL DOMAIN-CONTAINING PROTEIN"/>
    <property type="match status" value="1"/>
</dbReference>
<dbReference type="PANTHER" id="PTHR46609:SF6">
    <property type="entry name" value="EXONUCLEASE, PHAGE-TYPE_RECB, C-TERMINAL DOMAIN-CONTAINING PROTEIN-RELATED"/>
    <property type="match status" value="1"/>
</dbReference>
<dbReference type="Pfam" id="PF09588">
    <property type="entry name" value="YqaJ"/>
    <property type="match status" value="1"/>
</dbReference>
<dbReference type="SUPFAM" id="SSF52980">
    <property type="entry name" value="Restriction endonuclease-like"/>
    <property type="match status" value="1"/>
</dbReference>
<comment type="function">
    <text evidence="1">Plays a role in the negative regulation of host NF-kappa-B signaling pathway. Mechanistically, recruits host IKKA/CHUK and IKBKB to suppress their kinase activity towards NFKBIA.</text>
</comment>
<comment type="subunit">
    <text evidence="1">Interacts with IKKA/CHUK and IKBKB.</text>
</comment>
<comment type="subcellular location">
    <subcellularLocation>
        <location evidence="1">Host cytoplasm</location>
    </subcellularLocation>
</comment>
<comment type="similarity">
    <text evidence="2">Belongs to the asfivirus D345L family.</text>
</comment>
<accession>Q65182</accession>
<organismHost>
    <name type="scientific">Ornithodoros</name>
    <name type="common">relapsing fever ticks</name>
    <dbReference type="NCBI Taxonomy" id="6937"/>
</organismHost>
<organismHost>
    <name type="scientific">Sus scrofa</name>
    <name type="common">Pig</name>
    <dbReference type="NCBI Taxonomy" id="9823"/>
</organismHost>
<name>VF345_ASFB7</name>
<feature type="chain" id="PRO_0000373658" description="Protein D345L">
    <location>
        <begin position="1"/>
        <end position="345"/>
    </location>
</feature>
<gene>
    <name type="ordered locus">Ba71V-109</name>
    <name type="ORF">D345L</name>
</gene>
<proteinExistence type="evidence at protein level"/>
<evidence type="ECO:0000269" key="1">
    <source>
    </source>
</evidence>
<evidence type="ECO:0000305" key="2"/>
<sequence length="345" mass="39428">METFVRLFKDSPQQRSDAWHAIRRTQVGGSDLASVLGLNPYKSYYIILAEKANLFKKNLNRAACSWGTLFERVSKDLLELFCQTTVIGDNIHIDGTYLGYPGHSNSPDGFCHLTLGYTQQSWEIKTIFNNVRYEATKRIPVLVEIKSPFNRKIKNSVPSYYMPQIQSGLALSPPISMGIYVEAMFRVCGIHQLGSNNETNTDIHPPESMLPLAWGIITICSTQEHTEAPQDFGTLDAETFRQLLETLYQKDQYTIHYSMPYETACPEMPNVVGYFGWKVFIFQIIPVMKHPQFLKDKYPIIQQFLRDLHTIKASPSPMETYEKICCSEESALSTEDIDNFTDMLT</sequence>
<protein>
    <recommendedName>
        <fullName>Protein D345L</fullName>
        <shortName>pD345L</shortName>
    </recommendedName>
</protein>